<organism>
    <name type="scientific">Paraburkholderia xenovorans (strain LB400)</name>
    <dbReference type="NCBI Taxonomy" id="266265"/>
    <lineage>
        <taxon>Bacteria</taxon>
        <taxon>Pseudomonadati</taxon>
        <taxon>Pseudomonadota</taxon>
        <taxon>Betaproteobacteria</taxon>
        <taxon>Burkholderiales</taxon>
        <taxon>Burkholderiaceae</taxon>
        <taxon>Paraburkholderia</taxon>
    </lineage>
</organism>
<protein>
    <recommendedName>
        <fullName evidence="1">Nucleotide-binding protein Bxeno_A3642</fullName>
    </recommendedName>
</protein>
<feature type="chain" id="PRO_0000261927" description="Nucleotide-binding protein Bxeno_A3642">
    <location>
        <begin position="1"/>
        <end position="161"/>
    </location>
</feature>
<sequence>MPSFDVVCEANMIEVKNAIEQSNKEISTRFDFKGSDARVEHKENEITAYADDDFKLGQVKDVLLSKMAKRNVDVRFLDYGKIEKIGGDKVKQVIKIKKGVSGDLSKKIVRLVKDSKIKVQASIQGDAVRITGGKRDDLQSVIAMLRKDVTDTPLDFNNFRD</sequence>
<comment type="function">
    <text evidence="1">Nucleotide-binding protein.</text>
</comment>
<comment type="similarity">
    <text evidence="1">Belongs to the YajQ family.</text>
</comment>
<gene>
    <name type="ordered locus">Bxeno_A3642</name>
    <name type="ORF">Bxe_A0754</name>
</gene>
<accession>Q13UQ9</accession>
<name>Y3642_PARXL</name>
<proteinExistence type="inferred from homology"/>
<keyword id="KW-0547">Nucleotide-binding</keyword>
<keyword id="KW-1185">Reference proteome</keyword>
<dbReference type="EMBL" id="CP000270">
    <property type="protein sequence ID" value="ABE32180.1"/>
    <property type="molecule type" value="Genomic_DNA"/>
</dbReference>
<dbReference type="RefSeq" id="WP_007180572.1">
    <property type="nucleotide sequence ID" value="NZ_CP008760.1"/>
</dbReference>
<dbReference type="SMR" id="Q13UQ9"/>
<dbReference type="STRING" id="266265.Bxe_A0754"/>
<dbReference type="KEGG" id="bxb:DR64_2922"/>
<dbReference type="KEGG" id="bxe:Bxe_A0754"/>
<dbReference type="eggNOG" id="COG1666">
    <property type="taxonomic scope" value="Bacteria"/>
</dbReference>
<dbReference type="OrthoDB" id="9801447at2"/>
<dbReference type="Proteomes" id="UP000001817">
    <property type="component" value="Chromosome 1"/>
</dbReference>
<dbReference type="GO" id="GO:0005829">
    <property type="term" value="C:cytosol"/>
    <property type="evidence" value="ECO:0007669"/>
    <property type="project" value="TreeGrafter"/>
</dbReference>
<dbReference type="GO" id="GO:0000166">
    <property type="term" value="F:nucleotide binding"/>
    <property type="evidence" value="ECO:0007669"/>
    <property type="project" value="TreeGrafter"/>
</dbReference>
<dbReference type="CDD" id="cd11740">
    <property type="entry name" value="YajQ_like"/>
    <property type="match status" value="1"/>
</dbReference>
<dbReference type="Gene3D" id="3.30.70.990">
    <property type="entry name" value="YajQ-like, domain 2"/>
    <property type="match status" value="1"/>
</dbReference>
<dbReference type="HAMAP" id="MF_00632">
    <property type="entry name" value="YajQ"/>
    <property type="match status" value="1"/>
</dbReference>
<dbReference type="InterPro" id="IPR007551">
    <property type="entry name" value="DUF520"/>
</dbReference>
<dbReference type="InterPro" id="IPR035570">
    <property type="entry name" value="UPF0234_N"/>
</dbReference>
<dbReference type="InterPro" id="IPR036183">
    <property type="entry name" value="YajQ-like_sf"/>
</dbReference>
<dbReference type="NCBIfam" id="NF003819">
    <property type="entry name" value="PRK05412.1"/>
    <property type="match status" value="1"/>
</dbReference>
<dbReference type="PANTHER" id="PTHR30476">
    <property type="entry name" value="UPF0234 PROTEIN YAJQ"/>
    <property type="match status" value="1"/>
</dbReference>
<dbReference type="PANTHER" id="PTHR30476:SF0">
    <property type="entry name" value="UPF0234 PROTEIN YAJQ"/>
    <property type="match status" value="1"/>
</dbReference>
<dbReference type="Pfam" id="PF04461">
    <property type="entry name" value="DUF520"/>
    <property type="match status" value="1"/>
</dbReference>
<dbReference type="SUPFAM" id="SSF89963">
    <property type="entry name" value="YajQ-like"/>
    <property type="match status" value="2"/>
</dbReference>
<evidence type="ECO:0000255" key="1">
    <source>
        <dbReference type="HAMAP-Rule" id="MF_00632"/>
    </source>
</evidence>
<reference key="1">
    <citation type="journal article" date="2006" name="Proc. Natl. Acad. Sci. U.S.A.">
        <title>Burkholderia xenovorans LB400 harbors a multi-replicon, 9.73-Mbp genome shaped for versatility.</title>
        <authorList>
            <person name="Chain P.S.G."/>
            <person name="Denef V.J."/>
            <person name="Konstantinidis K.T."/>
            <person name="Vergez L.M."/>
            <person name="Agullo L."/>
            <person name="Reyes V.L."/>
            <person name="Hauser L."/>
            <person name="Cordova M."/>
            <person name="Gomez L."/>
            <person name="Gonzalez M."/>
            <person name="Land M."/>
            <person name="Lao V."/>
            <person name="Larimer F."/>
            <person name="LiPuma J.J."/>
            <person name="Mahenthiralingam E."/>
            <person name="Malfatti S.A."/>
            <person name="Marx C.J."/>
            <person name="Parnell J.J."/>
            <person name="Ramette A."/>
            <person name="Richardson P."/>
            <person name="Seeger M."/>
            <person name="Smith D."/>
            <person name="Spilker T."/>
            <person name="Sul W.J."/>
            <person name="Tsoi T.V."/>
            <person name="Ulrich L.E."/>
            <person name="Zhulin I.B."/>
            <person name="Tiedje J.M."/>
        </authorList>
    </citation>
    <scope>NUCLEOTIDE SEQUENCE [LARGE SCALE GENOMIC DNA]</scope>
    <source>
        <strain>LB400</strain>
    </source>
</reference>